<protein>
    <recommendedName>
        <fullName evidence="1">Ketol-acid reductoisomerase (NADP(+))</fullName>
        <shortName evidence="1">KARI</shortName>
        <ecNumber evidence="1">1.1.1.86</ecNumber>
    </recommendedName>
    <alternativeName>
        <fullName evidence="1">Acetohydroxy-acid isomeroreductase</fullName>
        <shortName evidence="1">AHIR</shortName>
    </alternativeName>
    <alternativeName>
        <fullName evidence="1">Alpha-keto-beta-hydroxylacyl reductoisomerase</fullName>
    </alternativeName>
    <alternativeName>
        <fullName evidence="1">Ketol-acid reductoisomerase type 1</fullName>
    </alternativeName>
    <alternativeName>
        <fullName evidence="1">Ketol-acid reductoisomerase type I</fullName>
    </alternativeName>
</protein>
<evidence type="ECO:0000255" key="1">
    <source>
        <dbReference type="HAMAP-Rule" id="MF_00435"/>
    </source>
</evidence>
<evidence type="ECO:0000255" key="2">
    <source>
        <dbReference type="PROSITE-ProRule" id="PRU01197"/>
    </source>
</evidence>
<evidence type="ECO:0000255" key="3">
    <source>
        <dbReference type="PROSITE-ProRule" id="PRU01198"/>
    </source>
</evidence>
<name>ILVC_GLUDA</name>
<feature type="chain" id="PRO_1000080630" description="Ketol-acid reductoisomerase (NADP(+))">
    <location>
        <begin position="1"/>
        <end position="339"/>
    </location>
</feature>
<feature type="domain" description="KARI N-terminal Rossmann" evidence="2">
    <location>
        <begin position="1"/>
        <end position="182"/>
    </location>
</feature>
<feature type="domain" description="KARI C-terminal knotted" evidence="3">
    <location>
        <begin position="183"/>
        <end position="328"/>
    </location>
</feature>
<feature type="active site" evidence="1">
    <location>
        <position position="108"/>
    </location>
</feature>
<feature type="binding site" evidence="1">
    <location>
        <begin position="24"/>
        <end position="27"/>
    </location>
    <ligand>
        <name>NADP(+)</name>
        <dbReference type="ChEBI" id="CHEBI:58349"/>
    </ligand>
</feature>
<feature type="binding site" evidence="1">
    <location>
        <position position="48"/>
    </location>
    <ligand>
        <name>NADP(+)</name>
        <dbReference type="ChEBI" id="CHEBI:58349"/>
    </ligand>
</feature>
<feature type="binding site" evidence="1">
    <location>
        <position position="51"/>
    </location>
    <ligand>
        <name>NADP(+)</name>
        <dbReference type="ChEBI" id="CHEBI:58349"/>
    </ligand>
</feature>
<feature type="binding site" evidence="1">
    <location>
        <begin position="83"/>
        <end position="86"/>
    </location>
    <ligand>
        <name>NADP(+)</name>
        <dbReference type="ChEBI" id="CHEBI:58349"/>
    </ligand>
</feature>
<feature type="binding site" evidence="1">
    <location>
        <position position="134"/>
    </location>
    <ligand>
        <name>NADP(+)</name>
        <dbReference type="ChEBI" id="CHEBI:58349"/>
    </ligand>
</feature>
<feature type="binding site" evidence="1">
    <location>
        <position position="191"/>
    </location>
    <ligand>
        <name>Mg(2+)</name>
        <dbReference type="ChEBI" id="CHEBI:18420"/>
        <label>1</label>
    </ligand>
</feature>
<feature type="binding site" evidence="1">
    <location>
        <position position="191"/>
    </location>
    <ligand>
        <name>Mg(2+)</name>
        <dbReference type="ChEBI" id="CHEBI:18420"/>
        <label>2</label>
    </ligand>
</feature>
<feature type="binding site" evidence="1">
    <location>
        <position position="195"/>
    </location>
    <ligand>
        <name>Mg(2+)</name>
        <dbReference type="ChEBI" id="CHEBI:18420"/>
        <label>1</label>
    </ligand>
</feature>
<feature type="binding site" evidence="1">
    <location>
        <position position="227"/>
    </location>
    <ligand>
        <name>Mg(2+)</name>
        <dbReference type="ChEBI" id="CHEBI:18420"/>
        <label>2</label>
    </ligand>
</feature>
<feature type="binding site" evidence="1">
    <location>
        <position position="231"/>
    </location>
    <ligand>
        <name>Mg(2+)</name>
        <dbReference type="ChEBI" id="CHEBI:18420"/>
        <label>2</label>
    </ligand>
</feature>
<feature type="binding site" evidence="1">
    <location>
        <position position="252"/>
    </location>
    <ligand>
        <name>substrate</name>
    </ligand>
</feature>
<dbReference type="EC" id="1.1.1.86" evidence="1"/>
<dbReference type="EMBL" id="AM889285">
    <property type="protein sequence ID" value="CAP53967.1"/>
    <property type="molecule type" value="Genomic_DNA"/>
</dbReference>
<dbReference type="EMBL" id="CP001189">
    <property type="protein sequence ID" value="ACI51544.1"/>
    <property type="molecule type" value="Genomic_DNA"/>
</dbReference>
<dbReference type="RefSeq" id="WP_012222275.1">
    <property type="nucleotide sequence ID" value="NC_010125.1"/>
</dbReference>
<dbReference type="SMR" id="A9GZJ4"/>
<dbReference type="STRING" id="272568.GDI0024"/>
<dbReference type="KEGG" id="gdi:GDI0024"/>
<dbReference type="KEGG" id="gdj:Gdia_1781"/>
<dbReference type="eggNOG" id="COG0059">
    <property type="taxonomic scope" value="Bacteria"/>
</dbReference>
<dbReference type="HOGENOM" id="CLU_033821_0_1_5"/>
<dbReference type="OrthoDB" id="9804088at2"/>
<dbReference type="UniPathway" id="UPA00047">
    <property type="reaction ID" value="UER00056"/>
</dbReference>
<dbReference type="UniPathway" id="UPA00049">
    <property type="reaction ID" value="UER00060"/>
</dbReference>
<dbReference type="Proteomes" id="UP000001176">
    <property type="component" value="Chromosome"/>
</dbReference>
<dbReference type="GO" id="GO:0005829">
    <property type="term" value="C:cytosol"/>
    <property type="evidence" value="ECO:0007669"/>
    <property type="project" value="TreeGrafter"/>
</dbReference>
<dbReference type="GO" id="GO:0004455">
    <property type="term" value="F:ketol-acid reductoisomerase activity"/>
    <property type="evidence" value="ECO:0007669"/>
    <property type="project" value="UniProtKB-UniRule"/>
</dbReference>
<dbReference type="GO" id="GO:0000287">
    <property type="term" value="F:magnesium ion binding"/>
    <property type="evidence" value="ECO:0007669"/>
    <property type="project" value="UniProtKB-UniRule"/>
</dbReference>
<dbReference type="GO" id="GO:0050661">
    <property type="term" value="F:NADP binding"/>
    <property type="evidence" value="ECO:0007669"/>
    <property type="project" value="InterPro"/>
</dbReference>
<dbReference type="GO" id="GO:0009097">
    <property type="term" value="P:isoleucine biosynthetic process"/>
    <property type="evidence" value="ECO:0007669"/>
    <property type="project" value="UniProtKB-UniRule"/>
</dbReference>
<dbReference type="GO" id="GO:0009099">
    <property type="term" value="P:L-valine biosynthetic process"/>
    <property type="evidence" value="ECO:0007669"/>
    <property type="project" value="UniProtKB-UniRule"/>
</dbReference>
<dbReference type="FunFam" id="3.40.50.720:FF:000023">
    <property type="entry name" value="Ketol-acid reductoisomerase (NADP(+))"/>
    <property type="match status" value="1"/>
</dbReference>
<dbReference type="Gene3D" id="6.10.240.10">
    <property type="match status" value="1"/>
</dbReference>
<dbReference type="Gene3D" id="3.40.50.720">
    <property type="entry name" value="NAD(P)-binding Rossmann-like Domain"/>
    <property type="match status" value="1"/>
</dbReference>
<dbReference type="HAMAP" id="MF_00435">
    <property type="entry name" value="IlvC"/>
    <property type="match status" value="1"/>
</dbReference>
<dbReference type="InterPro" id="IPR008927">
    <property type="entry name" value="6-PGluconate_DH-like_C_sf"/>
</dbReference>
<dbReference type="InterPro" id="IPR013023">
    <property type="entry name" value="KARI"/>
</dbReference>
<dbReference type="InterPro" id="IPR000506">
    <property type="entry name" value="KARI_C"/>
</dbReference>
<dbReference type="InterPro" id="IPR013116">
    <property type="entry name" value="KARI_N"/>
</dbReference>
<dbReference type="InterPro" id="IPR014359">
    <property type="entry name" value="KARI_prok"/>
</dbReference>
<dbReference type="InterPro" id="IPR036291">
    <property type="entry name" value="NAD(P)-bd_dom_sf"/>
</dbReference>
<dbReference type="NCBIfam" id="TIGR00465">
    <property type="entry name" value="ilvC"/>
    <property type="match status" value="1"/>
</dbReference>
<dbReference type="NCBIfam" id="NF004017">
    <property type="entry name" value="PRK05479.1"/>
    <property type="match status" value="1"/>
</dbReference>
<dbReference type="NCBIfam" id="NF009940">
    <property type="entry name" value="PRK13403.1"/>
    <property type="match status" value="1"/>
</dbReference>
<dbReference type="PANTHER" id="PTHR21371">
    <property type="entry name" value="KETOL-ACID REDUCTOISOMERASE, MITOCHONDRIAL"/>
    <property type="match status" value="1"/>
</dbReference>
<dbReference type="PANTHER" id="PTHR21371:SF1">
    <property type="entry name" value="KETOL-ACID REDUCTOISOMERASE, MITOCHONDRIAL"/>
    <property type="match status" value="1"/>
</dbReference>
<dbReference type="Pfam" id="PF01450">
    <property type="entry name" value="KARI_C"/>
    <property type="match status" value="1"/>
</dbReference>
<dbReference type="Pfam" id="PF07991">
    <property type="entry name" value="KARI_N"/>
    <property type="match status" value="1"/>
</dbReference>
<dbReference type="PIRSF" id="PIRSF000116">
    <property type="entry name" value="IlvC_gammaproteo"/>
    <property type="match status" value="1"/>
</dbReference>
<dbReference type="SUPFAM" id="SSF48179">
    <property type="entry name" value="6-phosphogluconate dehydrogenase C-terminal domain-like"/>
    <property type="match status" value="1"/>
</dbReference>
<dbReference type="SUPFAM" id="SSF51735">
    <property type="entry name" value="NAD(P)-binding Rossmann-fold domains"/>
    <property type="match status" value="1"/>
</dbReference>
<dbReference type="PROSITE" id="PS51851">
    <property type="entry name" value="KARI_C"/>
    <property type="match status" value="1"/>
</dbReference>
<dbReference type="PROSITE" id="PS51850">
    <property type="entry name" value="KARI_N"/>
    <property type="match status" value="1"/>
</dbReference>
<sequence>MRVYYDRDADVNLIKSKKVAIIGYGSQGHAHANNLKDSGVTDMVIGLRPGSSAVAKAEAAGFKVMGPSEAAAWADVVMVLTPDEGQGALYKEHLEANLKQGAALAFAHGLSIHFRIIEARPDLDVFLIAPKGPGHTVRSEYQRGGGVPSLVAVAQNASGNALEIALSYASANGGGRAGIIETSFKEEVETDLFGEQAVLCGGLVELIRAGFETLVEAGYAPEMAYFECLHETKLIVDLIYEGGIANMNYSISNTAEYGEYATGPRIVTPETKAEMKRVLTDIQDGTFVRNFILENQSGNVGFKAIRARNNAHQIEQVGEKLRGMMPWIGKNKLVDKTRN</sequence>
<accession>A9GZJ4</accession>
<accession>B5ZL23</accession>
<reference key="1">
    <citation type="journal article" date="2009" name="BMC Genomics">
        <title>Complete genome sequence of the sugarcane nitrogen-fixing endophyte Gluconacetobacter diazotrophicus Pal5.</title>
        <authorList>
            <person name="Bertalan M."/>
            <person name="Albano R."/>
            <person name="de Padua V."/>
            <person name="Rouws L."/>
            <person name="Rojas C."/>
            <person name="Hemerly A."/>
            <person name="Teixeira K."/>
            <person name="Schwab S."/>
            <person name="Araujo J."/>
            <person name="Oliveira A."/>
            <person name="Franca L."/>
            <person name="Magalhaes V."/>
            <person name="Alqueres S."/>
            <person name="Cardoso A."/>
            <person name="Almeida W."/>
            <person name="Loureiro M.M."/>
            <person name="Nogueira E."/>
            <person name="Cidade D."/>
            <person name="Oliveira D."/>
            <person name="Simao T."/>
            <person name="Macedo J."/>
            <person name="Valadao A."/>
            <person name="Dreschsel M."/>
            <person name="Freitas F."/>
            <person name="Vidal M."/>
            <person name="Guedes H."/>
            <person name="Rodrigues E."/>
            <person name="Meneses C."/>
            <person name="Brioso P."/>
            <person name="Pozzer L."/>
            <person name="Figueiredo D."/>
            <person name="Montano H."/>
            <person name="Junior J."/>
            <person name="de Souza Filho G."/>
            <person name="Martin Quintana Flores V."/>
            <person name="Ferreira B."/>
            <person name="Branco A."/>
            <person name="Gonzalez P."/>
            <person name="Guillobel H."/>
            <person name="Lemos M."/>
            <person name="Seibel L."/>
            <person name="Macedo J."/>
            <person name="Alves-Ferreira M."/>
            <person name="Sachetto-Martins G."/>
            <person name="Coelho A."/>
            <person name="Santos E."/>
            <person name="Amaral G."/>
            <person name="Neves A."/>
            <person name="Pacheco A.B."/>
            <person name="Carvalho D."/>
            <person name="Lery L."/>
            <person name="Bisch P."/>
            <person name="Rossle S.C."/>
            <person name="Urmenyi T."/>
            <person name="Rael Pereira A."/>
            <person name="Silva R."/>
            <person name="Rondinelli E."/>
            <person name="von Kruger W."/>
            <person name="Martins O."/>
            <person name="Baldani J.I."/>
            <person name="Ferreira P.C."/>
        </authorList>
    </citation>
    <scope>NUCLEOTIDE SEQUENCE [LARGE SCALE GENOMIC DNA]</scope>
    <source>
        <strain>ATCC 49037 / DSM 5601 / CCUG 37298 / CIP 103539 / LMG 7603 / PAl5</strain>
    </source>
</reference>
<reference key="2">
    <citation type="journal article" date="2010" name="Stand. Genomic Sci.">
        <title>Two genome sequences of the same bacterial strain, Gluconacetobacter diazotrophicus PAl 5, suggest a new standard in genome sequence submission.</title>
        <authorList>
            <person name="Giongo A."/>
            <person name="Tyler H.L."/>
            <person name="Zipperer U.N."/>
            <person name="Triplett E.W."/>
        </authorList>
    </citation>
    <scope>NUCLEOTIDE SEQUENCE [LARGE SCALE GENOMIC DNA]</scope>
    <source>
        <strain>ATCC 49037 / DSM 5601 / CCUG 37298 / CIP 103539 / LMG 7603 / PAl5</strain>
    </source>
</reference>
<gene>
    <name evidence="1" type="primary">ilvC</name>
    <name type="ordered locus">GDI0024</name>
    <name type="ordered locus">Gdia_1781</name>
</gene>
<organism>
    <name type="scientific">Gluconacetobacter diazotrophicus (strain ATCC 49037 / DSM 5601 / CCUG 37298 / CIP 103539 / LMG 7603 / PAl5)</name>
    <dbReference type="NCBI Taxonomy" id="272568"/>
    <lineage>
        <taxon>Bacteria</taxon>
        <taxon>Pseudomonadati</taxon>
        <taxon>Pseudomonadota</taxon>
        <taxon>Alphaproteobacteria</taxon>
        <taxon>Acetobacterales</taxon>
        <taxon>Acetobacteraceae</taxon>
        <taxon>Gluconacetobacter</taxon>
    </lineage>
</organism>
<keyword id="KW-0028">Amino-acid biosynthesis</keyword>
<keyword id="KW-0100">Branched-chain amino acid biosynthesis</keyword>
<keyword id="KW-0460">Magnesium</keyword>
<keyword id="KW-0479">Metal-binding</keyword>
<keyword id="KW-0521">NADP</keyword>
<keyword id="KW-0560">Oxidoreductase</keyword>
<keyword id="KW-1185">Reference proteome</keyword>
<proteinExistence type="inferred from homology"/>
<comment type="function">
    <text evidence="1">Involved in the biosynthesis of branched-chain amino acids (BCAA). Catalyzes an alkyl-migration followed by a ketol-acid reduction of (S)-2-acetolactate (S2AL) to yield (R)-2,3-dihydroxy-isovalerate. In the isomerase reaction, S2AL is rearranged via a Mg-dependent methyl migration to produce 3-hydroxy-3-methyl-2-ketobutyrate (HMKB). In the reductase reaction, this 2-ketoacid undergoes a metal-dependent reduction by NADPH to yield (R)-2,3-dihydroxy-isovalerate.</text>
</comment>
<comment type="catalytic activity">
    <reaction evidence="1">
        <text>(2R)-2,3-dihydroxy-3-methylbutanoate + NADP(+) = (2S)-2-acetolactate + NADPH + H(+)</text>
        <dbReference type="Rhea" id="RHEA:22068"/>
        <dbReference type="ChEBI" id="CHEBI:15378"/>
        <dbReference type="ChEBI" id="CHEBI:49072"/>
        <dbReference type="ChEBI" id="CHEBI:57783"/>
        <dbReference type="ChEBI" id="CHEBI:58349"/>
        <dbReference type="ChEBI" id="CHEBI:58476"/>
        <dbReference type="EC" id="1.1.1.86"/>
    </reaction>
</comment>
<comment type="catalytic activity">
    <reaction evidence="1">
        <text>(2R,3R)-2,3-dihydroxy-3-methylpentanoate + NADP(+) = (S)-2-ethyl-2-hydroxy-3-oxobutanoate + NADPH + H(+)</text>
        <dbReference type="Rhea" id="RHEA:13493"/>
        <dbReference type="ChEBI" id="CHEBI:15378"/>
        <dbReference type="ChEBI" id="CHEBI:49256"/>
        <dbReference type="ChEBI" id="CHEBI:49258"/>
        <dbReference type="ChEBI" id="CHEBI:57783"/>
        <dbReference type="ChEBI" id="CHEBI:58349"/>
        <dbReference type="EC" id="1.1.1.86"/>
    </reaction>
</comment>
<comment type="cofactor">
    <cofactor evidence="1">
        <name>Mg(2+)</name>
        <dbReference type="ChEBI" id="CHEBI:18420"/>
    </cofactor>
    <text evidence="1">Binds 2 magnesium ions per subunit.</text>
</comment>
<comment type="pathway">
    <text evidence="1">Amino-acid biosynthesis; L-isoleucine biosynthesis; L-isoleucine from 2-oxobutanoate: step 2/4.</text>
</comment>
<comment type="pathway">
    <text evidence="1">Amino-acid biosynthesis; L-valine biosynthesis; L-valine from pyruvate: step 2/4.</text>
</comment>
<comment type="similarity">
    <text evidence="1">Belongs to the ketol-acid reductoisomerase family.</text>
</comment>